<feature type="signal peptide" evidence="2">
    <location>
        <begin position="1"/>
        <end position="30"/>
    </location>
</feature>
<feature type="chain" id="PRO_0000013356" description="Hemolysin">
    <location>
        <begin position="31"/>
        <end position="1608"/>
    </location>
</feature>
<feature type="region of interest" description="Disordered" evidence="1">
    <location>
        <begin position="296"/>
        <end position="315"/>
    </location>
</feature>
<feature type="region of interest" description="Disordered" evidence="1">
    <location>
        <begin position="452"/>
        <end position="488"/>
    </location>
</feature>
<feature type="region of interest" description="Disordered" evidence="1">
    <location>
        <begin position="716"/>
        <end position="737"/>
    </location>
</feature>
<feature type="region of interest" description="Disordered" evidence="1">
    <location>
        <begin position="971"/>
        <end position="1030"/>
    </location>
</feature>
<feature type="region of interest" description="Disordered" evidence="1">
    <location>
        <begin position="1168"/>
        <end position="1199"/>
    </location>
</feature>
<feature type="region of interest" description="Disordered" evidence="1">
    <location>
        <begin position="1437"/>
        <end position="1469"/>
    </location>
</feature>
<feature type="compositionally biased region" description="Polar residues" evidence="1">
    <location>
        <begin position="303"/>
        <end position="313"/>
    </location>
</feature>
<feature type="compositionally biased region" description="Polar residues" evidence="1">
    <location>
        <begin position="460"/>
        <end position="474"/>
    </location>
</feature>
<feature type="compositionally biased region" description="Basic and acidic residues" evidence="1">
    <location>
        <begin position="478"/>
        <end position="488"/>
    </location>
</feature>
<feature type="compositionally biased region" description="Basic and acidic residues" evidence="1">
    <location>
        <begin position="716"/>
        <end position="726"/>
    </location>
</feature>
<feature type="compositionally biased region" description="Polar residues" evidence="1">
    <location>
        <begin position="727"/>
        <end position="736"/>
    </location>
</feature>
<feature type="compositionally biased region" description="Basic and acidic residues" evidence="1">
    <location>
        <begin position="977"/>
        <end position="996"/>
    </location>
</feature>
<feature type="compositionally biased region" description="Polar residues" evidence="1">
    <location>
        <begin position="1021"/>
        <end position="1030"/>
    </location>
</feature>
<proteinExistence type="evidence at protein level"/>
<name>HLYA_SERMA</name>
<protein>
    <recommendedName>
        <fullName>Hemolysin</fullName>
    </recommendedName>
</protein>
<dbReference type="EMBL" id="M22618">
    <property type="protein sequence ID" value="AAA50323.1"/>
    <property type="molecule type" value="Genomic_DNA"/>
</dbReference>
<dbReference type="PIR" id="A28182">
    <property type="entry name" value="A28182"/>
</dbReference>
<dbReference type="SMR" id="P15320"/>
<dbReference type="STRING" id="273526.SMDB11_3737"/>
<dbReference type="TCDB" id="1.C.75.1.1">
    <property type="family name" value="the bacterial-type pore-forming toxin (b-pft) family"/>
</dbReference>
<dbReference type="PHI-base" id="PHI:8111"/>
<dbReference type="GO" id="GO:0009279">
    <property type="term" value="C:cell outer membrane"/>
    <property type="evidence" value="ECO:0007669"/>
    <property type="project" value="UniProtKB-SubCell"/>
</dbReference>
<dbReference type="GO" id="GO:0003824">
    <property type="term" value="F:catalytic activity"/>
    <property type="evidence" value="ECO:0007669"/>
    <property type="project" value="UniProtKB-ARBA"/>
</dbReference>
<dbReference type="GO" id="GO:0090729">
    <property type="term" value="F:toxin activity"/>
    <property type="evidence" value="ECO:0007669"/>
    <property type="project" value="UniProtKB-KW"/>
</dbReference>
<dbReference type="GO" id="GO:0031640">
    <property type="term" value="P:killing of cells of another organism"/>
    <property type="evidence" value="ECO:0007669"/>
    <property type="project" value="UniProtKB-KW"/>
</dbReference>
<dbReference type="Gene3D" id="2.160.20.10">
    <property type="entry name" value="Single-stranded right-handed beta-helix, Pectin lyase-like"/>
    <property type="match status" value="1"/>
</dbReference>
<dbReference type="InterPro" id="IPR008638">
    <property type="entry name" value="FhaB/CdiA-like_TPS"/>
</dbReference>
<dbReference type="InterPro" id="IPR025157">
    <property type="entry name" value="Hemagglutinin_rpt"/>
</dbReference>
<dbReference type="InterPro" id="IPR012334">
    <property type="entry name" value="Pectin_lyas_fold"/>
</dbReference>
<dbReference type="InterPro" id="IPR011050">
    <property type="entry name" value="Pectin_lyase_fold/virulence"/>
</dbReference>
<dbReference type="NCBIfam" id="TIGR01901">
    <property type="entry name" value="adhes_NPXG"/>
    <property type="match status" value="1"/>
</dbReference>
<dbReference type="Pfam" id="PF13332">
    <property type="entry name" value="Fil_haemagg_2"/>
    <property type="match status" value="7"/>
</dbReference>
<dbReference type="Pfam" id="PF05860">
    <property type="entry name" value="TPS"/>
    <property type="match status" value="1"/>
</dbReference>
<dbReference type="SMART" id="SM00912">
    <property type="entry name" value="Haemagg_act"/>
    <property type="match status" value="1"/>
</dbReference>
<dbReference type="SUPFAM" id="SSF51126">
    <property type="entry name" value="Pectin lyase-like"/>
    <property type="match status" value="1"/>
</dbReference>
<organism>
    <name type="scientific">Serratia marcescens</name>
    <dbReference type="NCBI Taxonomy" id="615"/>
    <lineage>
        <taxon>Bacteria</taxon>
        <taxon>Pseudomonadati</taxon>
        <taxon>Pseudomonadota</taxon>
        <taxon>Gammaproteobacteria</taxon>
        <taxon>Enterobacterales</taxon>
        <taxon>Yersiniaceae</taxon>
        <taxon>Serratia</taxon>
    </lineage>
</organism>
<accession>P15320</accession>
<keyword id="KW-0998">Cell outer membrane</keyword>
<keyword id="KW-0204">Cytolysis</keyword>
<keyword id="KW-0903">Direct protein sequencing</keyword>
<keyword id="KW-0354">Hemolysis</keyword>
<keyword id="KW-0472">Membrane</keyword>
<keyword id="KW-0732">Signal</keyword>
<keyword id="KW-0800">Toxin</keyword>
<keyword id="KW-0843">Virulence</keyword>
<gene>
    <name type="primary">shlA</name>
</gene>
<reference key="1">
    <citation type="journal article" date="1988" name="J. Bacteriol.">
        <title>Molecular characterization of the hemolysin determinant of Serratia marcescens.</title>
        <authorList>
            <person name="Poole K."/>
            <person name="Schiebel E."/>
            <person name="Braun V."/>
        </authorList>
    </citation>
    <scope>NUCLEOTIDE SEQUENCE [GENOMIC DNA]</scope>
    <scope>PROTEIN SEQUENCE OF 31-40</scope>
    <source>
        <strain>SN8</strain>
    </source>
</reference>
<evidence type="ECO:0000256" key="1">
    <source>
        <dbReference type="SAM" id="MobiDB-lite"/>
    </source>
</evidence>
<evidence type="ECO:0000269" key="2">
    <source>
    </source>
</evidence>
<comment type="function">
    <text>Bacterial hemolysins are exotoxins that attack blood cell membranes and cause cell rupture by mechanisms not clearly defined.</text>
</comment>
<comment type="function">
    <text>Cell-bound hemolysin, which releases heme-iron from erythrocytes by interaction with the erythrocyte membrane. ShlA requires ShlB function.</text>
</comment>
<comment type="subcellular location">
    <subcellularLocation>
        <location>Cell outer membrane</location>
    </subcellularLocation>
</comment>
<sequence>MKNNNFRLSAAGKLAAALAIILAASAGAYAAEIVAANGANGPGVSTAATGAQVVDIVAPNGNGLSHNQYQDFNVNQPGAVLNNSREAGLSQLAGQLGANPNLGGREASVILNEVIGRNPSLLHGQQEIFGMAADYVLANPNGISCQSCGFINTSHSSLVVGNPLVENGVLQGYSTFGNRNTLSLNGTLNAGGVLDLIAPKIDSRGEVIVQDFKQSNGKVTSAAINAISGLNRVARDGTVQASQQMPTALDSYYLGSMQAGRINIINTAQGSGVKLAGSLNAGDELKVKAYDIRSESRVDDASSNKNGGDNYQNYRGGIYVNDRSSSQTLTRTELKGKNISLVADNHAHLTATDIRGEDITLQGGKLTLDGQQLKQTQGHTDDRWFYSWQYDVTREREQLQQAGSTVAASGSAKLISTQEDVKLLGANVSADRALSVKAARDVHLAGLVEKDKSSERGYQRNHTSSLRTGRWSNSDESESLKASELRSEGELTLKAGRNVSTQGAKVHAQRDLTIDADNQIQVGVQKTANAKAVRDDKTSWGGIGGGDNKNNSNRREISHASELTSGGTLRLNGQQGVTITGSKARGQKGGEVTATHGGLRIDNALSTTVDKIDARTGTAFNITSSSHKADNSYQSSTASELKSDTNLTLVSHKDADVIGSQVASGGELSVESKTGNINVKAAERQQNIDEQKTALTVNGYAKEAGDKQYRAGLRIEHTRDSEKTTRTENSASSLSGGSVKLKAEKDVTFSGSKLVADKGDASVSGNKVSFLAADDKTASNTEQTKIGGGFYYTGGIDKLGSGVEAGYENNKTQAQSSKAITSGSDVKGNLTINARDKLTQQGAQHSVGGAYQENAAGVDHLAAADTASTTTTKTDVGVNIGANVDYSAVTRPVERAVGKAAKLDATGVINDIGGIGAPNVGLDIGAQGGSSEKRSSSSQAVVSSVQAGSIDINAKGEVRDQGTQYQASKGAVNLTADSHRSEAAANRQDEQSRDTRGSAGVRVYTTTGSDLTVDAKGEGGTQRSNSSASQAVTGSIDAANGINVNVKKDAIYQGTALNGGRGKTAVNAGGDIRLDQASDKQSESRSGFNVKASAKGGFTADSKNFGAGFGGGTHNGESSSSTAQVGNISGQQGVELKAGRDLTLQGTDVKSQGDVSLSAGNKVALQAAESTQTRKESKLSGNIDLGAGSSDSKEKTGGNLSAGGAFDIAKVNESATERQGATIASDGKVTLSANGKGDDALHLQGAKVSGGSAALEAKNGGILLESAKNEQHKDNWSLGIKANAKGGQTFNKDAGGKVDPNTGKDTHTLGAGLKVGVEQQDKTTHANTGITAGDVTLNSGKDTRLAGARVDADSVQGKVGGDLHVESRKDVENGVKVDVDAGLSHSNDPGSSITSKLSKVGTPRYAGKVKEKLEAGVNKVADATTDKYNSVARRLDPQQDTTGAVSFSKAEGKVTLPATPAGEKPQGPLWDRGARTVGGAVKDSITGPAGRQGHLKVNADVVNNNAVGEQSAIAGKNGVALQVGGQTQLTGGEIRSQQGKVELGGSQVSQQDVNGQRYQGGGRVDAAATVGGLLGGAAKQSVAGNVPFASGHASTQQADAKAGVFSGK</sequence>